<evidence type="ECO:0000250" key="1"/>
<evidence type="ECO:0000250" key="2">
    <source>
        <dbReference type="UniProtKB" id="P02776"/>
    </source>
</evidence>
<evidence type="ECO:0000250" key="3">
    <source>
        <dbReference type="UniProtKB" id="P06765"/>
    </source>
</evidence>
<evidence type="ECO:0000305" key="4"/>
<accession>Q9Z126</accession>
<gene>
    <name type="primary">Pf4</name>
    <name type="synonym">Cxcl4</name>
    <name type="synonym">Scyb4</name>
</gene>
<keyword id="KW-0145">Chemotaxis</keyword>
<keyword id="KW-0202">Cytokine</keyword>
<keyword id="KW-1015">Disulfide bond</keyword>
<keyword id="KW-0325">Glycoprotein</keyword>
<keyword id="KW-0358">Heparin-binding</keyword>
<keyword id="KW-0597">Phosphoprotein</keyword>
<keyword id="KW-1185">Reference proteome</keyword>
<keyword id="KW-0964">Secreted</keyword>
<keyword id="KW-0732">Signal</keyword>
<reference key="1">
    <citation type="journal article" date="1999" name="J. Hum. Genet.">
        <title>Significantly elevated expression of PF4 (platelet factor 4) and eotaxin in the NOA mouse, a model for atopic dermatitis.</title>
        <authorList>
            <person name="Watanabe O."/>
            <person name="Natori K."/>
            <person name="Tamari M."/>
            <person name="Shiomoto Y."/>
            <person name="Kubo S."/>
            <person name="Nakamura Y."/>
        </authorList>
    </citation>
    <scope>NUCLEOTIDE SEQUENCE [MRNA]</scope>
    <source>
        <strain>C57BL/6J</strain>
        <tissue>Spleen</tissue>
    </source>
</reference>
<reference key="2">
    <citation type="journal article" date="2001" name="Blood">
        <title>Localization of distal regulatory domains in the megakaryocyte-specific platelet basic protein/platelet factor 4 gene locus.</title>
        <authorList>
            <person name="Zhang C."/>
            <person name="Thornton M.A."/>
            <person name="Kowalska M.A."/>
            <person name="Sachis B.S."/>
            <person name="Feldman M."/>
            <person name="Poncz M."/>
            <person name="McKenzie S.E."/>
            <person name="Reilly M.P."/>
        </authorList>
    </citation>
    <scope>NUCLEOTIDE SEQUENCE [GENOMIC DNA]</scope>
</reference>
<reference key="3">
    <citation type="journal article" date="2010" name="Cell">
        <title>A tissue-specific atlas of mouse protein phosphorylation and expression.</title>
        <authorList>
            <person name="Huttlin E.L."/>
            <person name="Jedrychowski M.P."/>
            <person name="Elias J.E."/>
            <person name="Goswami T."/>
            <person name="Rad R."/>
            <person name="Beausoleil S.A."/>
            <person name="Villen J."/>
            <person name="Haas W."/>
            <person name="Sowa M.E."/>
            <person name="Gygi S.P."/>
        </authorList>
    </citation>
    <scope>IDENTIFICATION BY MASS SPECTROMETRY [LARGE SCALE ANALYSIS]</scope>
    <source>
        <tissue>Spleen</tissue>
    </source>
</reference>
<proteinExistence type="evidence at protein level"/>
<name>PLF4_MOUSE</name>
<protein>
    <recommendedName>
        <fullName>Platelet factor 4</fullName>
        <shortName>PF-4</shortName>
    </recommendedName>
    <alternativeName>
        <fullName>C-X-C motif chemokine 4</fullName>
    </alternativeName>
</protein>
<organism>
    <name type="scientific">Mus musculus</name>
    <name type="common">Mouse</name>
    <dbReference type="NCBI Taxonomy" id="10090"/>
    <lineage>
        <taxon>Eukaryota</taxon>
        <taxon>Metazoa</taxon>
        <taxon>Chordata</taxon>
        <taxon>Craniata</taxon>
        <taxon>Vertebrata</taxon>
        <taxon>Euteleostomi</taxon>
        <taxon>Mammalia</taxon>
        <taxon>Eutheria</taxon>
        <taxon>Euarchontoglires</taxon>
        <taxon>Glires</taxon>
        <taxon>Rodentia</taxon>
        <taxon>Myomorpha</taxon>
        <taxon>Muroidea</taxon>
        <taxon>Muridae</taxon>
        <taxon>Murinae</taxon>
        <taxon>Mus</taxon>
        <taxon>Mus</taxon>
    </lineage>
</organism>
<comment type="function">
    <text evidence="2">Chemokine released during platelet aggregation that plays a role in different biological processes including hematopoiesis, cell proliferation, differentiation, and activation. Acts via different functional receptors including CCR1, CXCR3A or CXCR3B. Upon interaction with CXCR3A receptor, induces activated T-lymphocytes migration mediated via downstream Ras/extracellular signal-regulated kinase (ERK) signaling. Neutralizes the anticoagulant effect of heparin by binding more strongly to heparin than to the chondroitin-4-sulfate chains of the carrier molecule. Plays a role in the inhibition of hematopoiesis and in the maintenance of hematopoietic stem cell (HSC) quiescence. Chemotactic for neutrophils and monocytes via CCR1. Inhibits endothelial cell proliferation. In cooperation with toll-like receptor 8/TLR8, induces chromatin remodeling and activates inflammatory gene expression via the TBK1-IRF5 axis. In addition, induces myofibroblast differentiation and collagen synthesis in different precursor cells, including endothelial cells, by stimulating endothelial-to-mesenchymal transition. Interacts with thrombomodulin/THBD to enhance the activation of protein C and thus potentiates its anticoagulant activity.</text>
</comment>
<comment type="subunit">
    <text evidence="2">Homotetramer. Interacts with TNFAIP6 (via Link domain). Interacts with CCR1. Interacts with CXCR3. Interacts with THBD; this interaction enhances generation of activated protein C.</text>
</comment>
<comment type="subcellular location">
    <subcellularLocation>
        <location>Secreted</location>
    </subcellularLocation>
</comment>
<comment type="similarity">
    <text evidence="4">Belongs to the intercrine alpha (chemokine CxC) family.</text>
</comment>
<sequence>MSVAAVFRGLRPSPELLLLGLLFLPAVVAVTSAGPEESDGDLSCVCVKTISSGIHLKHITSLEVIKAGRHCAVPQLIATLKNGRKICLDRQAPLYKKVIKKILES</sequence>
<dbReference type="EMBL" id="AB017491">
    <property type="protein sequence ID" value="BAA75660.1"/>
    <property type="molecule type" value="mRNA"/>
</dbReference>
<dbReference type="EMBL" id="AF349465">
    <property type="protein sequence ID" value="AAK30163.1"/>
    <property type="molecule type" value="Genomic_DNA"/>
</dbReference>
<dbReference type="CCDS" id="CCDS19416.1"/>
<dbReference type="RefSeq" id="NP_064316.1">
    <property type="nucleotide sequence ID" value="NM_019932.5"/>
</dbReference>
<dbReference type="SMR" id="Q9Z126"/>
<dbReference type="BioGRID" id="208157">
    <property type="interactions" value="1"/>
</dbReference>
<dbReference type="DIP" id="DIP-61569N"/>
<dbReference type="FunCoup" id="Q9Z126">
    <property type="interactions" value="581"/>
</dbReference>
<dbReference type="IntAct" id="Q9Z126">
    <property type="interactions" value="3"/>
</dbReference>
<dbReference type="STRING" id="10090.ENSMUSP00000031320"/>
<dbReference type="GlyCosmos" id="Q9Z126">
    <property type="glycosylation" value="1 site, No reported glycans"/>
</dbReference>
<dbReference type="GlyGen" id="Q9Z126">
    <property type="glycosylation" value="1 site"/>
</dbReference>
<dbReference type="iPTMnet" id="Q9Z126"/>
<dbReference type="PhosphoSitePlus" id="Q9Z126"/>
<dbReference type="CPTAC" id="non-CPTAC-5615"/>
<dbReference type="jPOST" id="Q9Z126"/>
<dbReference type="PaxDb" id="10090-ENSMUSP00000031320"/>
<dbReference type="PeptideAtlas" id="Q9Z126"/>
<dbReference type="ProteomicsDB" id="289763"/>
<dbReference type="DNASU" id="56744"/>
<dbReference type="Ensembl" id="ENSMUST00000031320.8">
    <property type="protein sequence ID" value="ENSMUSP00000031320.7"/>
    <property type="gene ID" value="ENSMUSG00000029373.8"/>
</dbReference>
<dbReference type="GeneID" id="56744"/>
<dbReference type="KEGG" id="mmu:56744"/>
<dbReference type="UCSC" id="uc008ybi.2">
    <property type="organism name" value="mouse"/>
</dbReference>
<dbReference type="AGR" id="MGI:1888711"/>
<dbReference type="CTD" id="5196"/>
<dbReference type="MGI" id="MGI:1888711">
    <property type="gene designation" value="Pf4"/>
</dbReference>
<dbReference type="VEuPathDB" id="HostDB:ENSMUSG00000029373"/>
<dbReference type="eggNOG" id="ENOG502TF57">
    <property type="taxonomic scope" value="Eukaryota"/>
</dbReference>
<dbReference type="GeneTree" id="ENSGT00940000163368"/>
<dbReference type="HOGENOM" id="CLU_143902_1_2_1"/>
<dbReference type="InParanoid" id="Q9Z126"/>
<dbReference type="OMA" id="CAVPQLI"/>
<dbReference type="OrthoDB" id="9937393at2759"/>
<dbReference type="PhylomeDB" id="Q9Z126"/>
<dbReference type="TreeFam" id="TF333433"/>
<dbReference type="Reactome" id="R-MMU-114608">
    <property type="pathway name" value="Platelet degranulation"/>
</dbReference>
<dbReference type="Reactome" id="R-MMU-140875">
    <property type="pathway name" value="Common Pathway of Fibrin Clot Formation"/>
</dbReference>
<dbReference type="Reactome" id="R-MMU-202733">
    <property type="pathway name" value="Cell surface interactions at the vascular wall"/>
</dbReference>
<dbReference type="Reactome" id="R-MMU-380108">
    <property type="pathway name" value="Chemokine receptors bind chemokines"/>
</dbReference>
<dbReference type="Reactome" id="R-MMU-418594">
    <property type="pathway name" value="G alpha (i) signalling events"/>
</dbReference>
<dbReference type="BioGRID-ORCS" id="56744">
    <property type="hits" value="1 hit in 78 CRISPR screens"/>
</dbReference>
<dbReference type="PRO" id="PR:Q9Z126"/>
<dbReference type="Proteomes" id="UP000000589">
    <property type="component" value="Chromosome 5"/>
</dbReference>
<dbReference type="RNAct" id="Q9Z126">
    <property type="molecule type" value="protein"/>
</dbReference>
<dbReference type="Bgee" id="ENSMUSG00000029373">
    <property type="expression patterns" value="Expressed in femorotibial joint and 198 other cell types or tissues"/>
</dbReference>
<dbReference type="ExpressionAtlas" id="Q9Z126">
    <property type="expression patterns" value="baseline and differential"/>
</dbReference>
<dbReference type="GO" id="GO:0062023">
    <property type="term" value="C:collagen-containing extracellular matrix"/>
    <property type="evidence" value="ECO:0007005"/>
    <property type="project" value="BHF-UCL"/>
</dbReference>
<dbReference type="GO" id="GO:0005615">
    <property type="term" value="C:extracellular space"/>
    <property type="evidence" value="ECO:0007669"/>
    <property type="project" value="UniProtKB-KW"/>
</dbReference>
<dbReference type="GO" id="GO:0031091">
    <property type="term" value="C:platelet alpha granule"/>
    <property type="evidence" value="ECO:0007669"/>
    <property type="project" value="Ensembl"/>
</dbReference>
<dbReference type="GO" id="GO:0032991">
    <property type="term" value="C:protein-containing complex"/>
    <property type="evidence" value="ECO:0007669"/>
    <property type="project" value="Ensembl"/>
</dbReference>
<dbReference type="GO" id="GO:0008009">
    <property type="term" value="F:chemokine activity"/>
    <property type="evidence" value="ECO:0007669"/>
    <property type="project" value="InterPro"/>
</dbReference>
<dbReference type="GO" id="GO:0048248">
    <property type="term" value="F:CXCR3 chemokine receptor binding"/>
    <property type="evidence" value="ECO:0000250"/>
    <property type="project" value="UniProtKB"/>
</dbReference>
<dbReference type="GO" id="GO:0008201">
    <property type="term" value="F:heparin binding"/>
    <property type="evidence" value="ECO:0000250"/>
    <property type="project" value="UniProtKB"/>
</dbReference>
<dbReference type="GO" id="GO:0007189">
    <property type="term" value="P:adenylate cyclase-activating G protein-coupled receptor signaling pathway"/>
    <property type="evidence" value="ECO:0000250"/>
    <property type="project" value="UniProtKB"/>
</dbReference>
<dbReference type="GO" id="GO:0061844">
    <property type="term" value="P:antimicrobial humoral immune response mediated by antimicrobial peptide"/>
    <property type="evidence" value="ECO:0000315"/>
    <property type="project" value="UniProtKB"/>
</dbReference>
<dbReference type="GO" id="GO:0019221">
    <property type="term" value="P:cytokine-mediated signaling pathway"/>
    <property type="evidence" value="ECO:0000250"/>
    <property type="project" value="UniProtKB"/>
</dbReference>
<dbReference type="GO" id="GO:0042832">
    <property type="term" value="P:defense response to protozoan"/>
    <property type="evidence" value="ECO:0000315"/>
    <property type="project" value="UniProtKB"/>
</dbReference>
<dbReference type="GO" id="GO:0030595">
    <property type="term" value="P:leukocyte chemotaxis"/>
    <property type="evidence" value="ECO:0000250"/>
    <property type="project" value="UniProtKB"/>
</dbReference>
<dbReference type="GO" id="GO:0016525">
    <property type="term" value="P:negative regulation of angiogenesis"/>
    <property type="evidence" value="ECO:0000250"/>
    <property type="project" value="UniProtKB"/>
</dbReference>
<dbReference type="GO" id="GO:0050728">
    <property type="term" value="P:negative regulation of inflammatory response"/>
    <property type="evidence" value="ECO:0007669"/>
    <property type="project" value="Ensembl"/>
</dbReference>
<dbReference type="GO" id="GO:0045653">
    <property type="term" value="P:negative regulation of megakaryocyte differentiation"/>
    <property type="evidence" value="ECO:0000250"/>
    <property type="project" value="UniProtKB"/>
</dbReference>
<dbReference type="GO" id="GO:2000320">
    <property type="term" value="P:negative regulation of T-helper 17 cell differentiation"/>
    <property type="evidence" value="ECO:0007669"/>
    <property type="project" value="Ensembl"/>
</dbReference>
<dbReference type="GO" id="GO:0030168">
    <property type="term" value="P:platelet activation"/>
    <property type="evidence" value="ECO:0000250"/>
    <property type="project" value="UniProtKB"/>
</dbReference>
<dbReference type="GO" id="GO:0045944">
    <property type="term" value="P:positive regulation of transcription by RNA polymerase II"/>
    <property type="evidence" value="ECO:0000250"/>
    <property type="project" value="UniProtKB"/>
</dbReference>
<dbReference type="GO" id="GO:0065003">
    <property type="term" value="P:protein-containing complex assembly"/>
    <property type="evidence" value="ECO:0007669"/>
    <property type="project" value="Ensembl"/>
</dbReference>
<dbReference type="GO" id="GO:0042127">
    <property type="term" value="P:regulation of cell population proliferation"/>
    <property type="evidence" value="ECO:0000250"/>
    <property type="project" value="UniProtKB"/>
</dbReference>
<dbReference type="GO" id="GO:1904044">
    <property type="term" value="P:response to aldosterone"/>
    <property type="evidence" value="ECO:0007669"/>
    <property type="project" value="Ensembl"/>
</dbReference>
<dbReference type="CDD" id="cd00273">
    <property type="entry name" value="Chemokine_CXC"/>
    <property type="match status" value="1"/>
</dbReference>
<dbReference type="FunFam" id="2.40.50.40:FF:000004">
    <property type="entry name" value="C-X-C motif chemokine"/>
    <property type="match status" value="1"/>
</dbReference>
<dbReference type="Gene3D" id="2.40.50.40">
    <property type="match status" value="1"/>
</dbReference>
<dbReference type="InterPro" id="IPR039809">
    <property type="entry name" value="Chemokine_b/g/d"/>
</dbReference>
<dbReference type="InterPro" id="IPR001089">
    <property type="entry name" value="Chemokine_CXC"/>
</dbReference>
<dbReference type="InterPro" id="IPR018048">
    <property type="entry name" value="Chemokine_CXC_CS"/>
</dbReference>
<dbReference type="InterPro" id="IPR001811">
    <property type="entry name" value="Chemokine_IL8-like_dom"/>
</dbReference>
<dbReference type="InterPro" id="IPR033899">
    <property type="entry name" value="CXC_Chemokine_domain"/>
</dbReference>
<dbReference type="InterPro" id="IPR036048">
    <property type="entry name" value="Interleukin_8-like_sf"/>
</dbReference>
<dbReference type="PANTHER" id="PTHR12015:SF211">
    <property type="entry name" value="PLATELET FACTOR 4"/>
    <property type="match status" value="1"/>
</dbReference>
<dbReference type="PANTHER" id="PTHR12015">
    <property type="entry name" value="SMALL INDUCIBLE CYTOKINE A"/>
    <property type="match status" value="1"/>
</dbReference>
<dbReference type="Pfam" id="PF00048">
    <property type="entry name" value="IL8"/>
    <property type="match status" value="1"/>
</dbReference>
<dbReference type="PRINTS" id="PR00436">
    <property type="entry name" value="INTERLEUKIN8"/>
</dbReference>
<dbReference type="PRINTS" id="PR00437">
    <property type="entry name" value="SMALLCYTKCXC"/>
</dbReference>
<dbReference type="SMART" id="SM00199">
    <property type="entry name" value="SCY"/>
    <property type="match status" value="1"/>
</dbReference>
<dbReference type="SUPFAM" id="SSF54117">
    <property type="entry name" value="Interleukin 8-like chemokines"/>
    <property type="match status" value="1"/>
</dbReference>
<dbReference type="PROSITE" id="PS00471">
    <property type="entry name" value="SMALL_CYTOKINES_CXC"/>
    <property type="match status" value="1"/>
</dbReference>
<feature type="signal peptide" evidence="1">
    <location>
        <begin position="1"/>
        <end position="29"/>
    </location>
</feature>
<feature type="chain" id="PRO_0000005069" description="Platelet factor 4">
    <location>
        <begin position="30"/>
        <end position="105"/>
    </location>
</feature>
<feature type="binding site" evidence="1">
    <location>
        <begin position="96"/>
        <end position="102"/>
    </location>
    <ligand>
        <name>heparin</name>
        <dbReference type="ChEBI" id="CHEBI:28304"/>
    </ligand>
</feature>
<feature type="modified residue" description="Phosphoserine" evidence="3">
    <location>
        <position position="61"/>
    </location>
</feature>
<feature type="glycosylation site" description="O-linked (GalNAc...) threonine" evidence="1">
    <location>
        <position position="31"/>
    </location>
</feature>
<feature type="disulfide bond" evidence="1">
    <location>
        <begin position="44"/>
        <end position="71"/>
    </location>
</feature>
<feature type="disulfide bond" evidence="1">
    <location>
        <begin position="46"/>
        <end position="87"/>
    </location>
</feature>